<gene>
    <name type="primary">NAP1</name>
    <name type="ordered locus">Os08g0544500</name>
    <name type="ordered locus">LOC_Os08g43130</name>
    <name type="ORF">P0623F08.25</name>
</gene>
<organism>
    <name type="scientific">Oryza sativa subsp. japonica</name>
    <name type="common">Rice</name>
    <dbReference type="NCBI Taxonomy" id="39947"/>
    <lineage>
        <taxon>Eukaryota</taxon>
        <taxon>Viridiplantae</taxon>
        <taxon>Streptophyta</taxon>
        <taxon>Embryophyta</taxon>
        <taxon>Tracheophyta</taxon>
        <taxon>Spermatophyta</taxon>
        <taxon>Magnoliopsida</taxon>
        <taxon>Liliopsida</taxon>
        <taxon>Poales</taxon>
        <taxon>Poaceae</taxon>
        <taxon>BOP clade</taxon>
        <taxon>Oryzoideae</taxon>
        <taxon>Oryzeae</taxon>
        <taxon>Oryzinae</taxon>
        <taxon>Oryza</taxon>
        <taxon>Oryza sativa</taxon>
    </lineage>
</organism>
<comment type="function">
    <text evidence="1">Involved in regulation of actin and microtubule organization. Part of a WAVE complex that activates the Arp2/3 complex (By similarity).</text>
</comment>
<comment type="subunit">
    <text evidence="1">Binds PIR.</text>
</comment>
<comment type="similarity">
    <text evidence="3">Belongs to the HEM-1/HEM-2 family.</text>
</comment>
<comment type="sequence caution" evidence="3">
    <conflict type="frameshift">
        <sequence resource="EMBL" id="AK071354"/>
    </conflict>
</comment>
<feature type="chain" id="PRO_0000216179" description="Probable protein NAP1">
    <location>
        <begin position="1"/>
        <end position="1359"/>
    </location>
</feature>
<feature type="region of interest" description="Disordered" evidence="2">
    <location>
        <begin position="1267"/>
        <end position="1359"/>
    </location>
</feature>
<feature type="compositionally biased region" description="Basic and acidic residues" evidence="2">
    <location>
        <begin position="1272"/>
        <end position="1282"/>
    </location>
</feature>
<feature type="compositionally biased region" description="Basic and acidic residues" evidence="2">
    <location>
        <begin position="1300"/>
        <end position="1310"/>
    </location>
</feature>
<feature type="sequence conflict" description="In Ref. 3; AK059291." evidence="3" ref="3">
    <original>T</original>
    <variation>A</variation>
    <location>
        <position position="1109"/>
    </location>
</feature>
<reference key="1">
    <citation type="journal article" date="2005" name="Nature">
        <title>The map-based sequence of the rice genome.</title>
        <authorList>
            <consortium name="International rice genome sequencing project (IRGSP)"/>
        </authorList>
    </citation>
    <scope>NUCLEOTIDE SEQUENCE [LARGE SCALE GENOMIC DNA]</scope>
    <source>
        <strain>cv. Nipponbare</strain>
    </source>
</reference>
<reference key="2">
    <citation type="journal article" date="2013" name="Rice">
        <title>Improvement of the Oryza sativa Nipponbare reference genome using next generation sequence and optical map data.</title>
        <authorList>
            <person name="Kawahara Y."/>
            <person name="de la Bastide M."/>
            <person name="Hamilton J.P."/>
            <person name="Kanamori H."/>
            <person name="McCombie W.R."/>
            <person name="Ouyang S."/>
            <person name="Schwartz D.C."/>
            <person name="Tanaka T."/>
            <person name="Wu J."/>
            <person name="Zhou S."/>
            <person name="Childs K.L."/>
            <person name="Davidson R.M."/>
            <person name="Lin H."/>
            <person name="Quesada-Ocampo L."/>
            <person name="Vaillancourt B."/>
            <person name="Sakai H."/>
            <person name="Lee S.S."/>
            <person name="Kim J."/>
            <person name="Numa H."/>
            <person name="Itoh T."/>
            <person name="Buell C.R."/>
            <person name="Matsumoto T."/>
        </authorList>
    </citation>
    <scope>GENOME REANNOTATION</scope>
    <source>
        <strain>cv. Nipponbare</strain>
    </source>
</reference>
<reference key="3">
    <citation type="journal article" date="2003" name="Science">
        <title>Collection, mapping, and annotation of over 28,000 cDNA clones from japonica rice.</title>
        <authorList>
            <consortium name="The rice full-length cDNA consortium"/>
        </authorList>
    </citation>
    <scope>NUCLEOTIDE SEQUENCE [LARGE SCALE MRNA]</scope>
    <source>
        <strain>cv. Nipponbare</strain>
    </source>
</reference>
<name>NCKP1_ORYSJ</name>
<accession>Q6ZBH9</accession>
<keyword id="KW-1185">Reference proteome</keyword>
<protein>
    <recommendedName>
        <fullName>Probable protein NAP1</fullName>
    </recommendedName>
    <alternativeName>
        <fullName>NAP of plants</fullName>
    </alternativeName>
    <alternativeName>
        <fullName>Nck-associated protein 1</fullName>
    </alternativeName>
    <alternativeName>
        <fullName>P125Nap1</fullName>
    </alternativeName>
</protein>
<sequence>MAHVSFKSKEADSMSRWSKYLSTEESPPSASLSWRAMGVDGPQGSASGQKHLQMEPVVQLSKVAEGLLAKMYRLNSILDYPDPNAHTFSEAFWKAGVMPNFPKICITLSKKFPEHPNKLQLEKVDKFALDALNENAEGYMQNLEQWITLLLDLLEFREQALRLILDLSSTVITLLPHQNSLILHAFMDLFCSFVRVNLFSDKIPRKMILQVYNILHIMLKGGRDCEFYHRLVQFVDLYDPPVKGLHEDLNFVSPRIGEVLEAVGPIIFLSTDTKKLRNEGFLSPFHPRYPDILTNSAHPMRAQDLANVTSYREWVLLGYLVCPDELLRVTSIDVAMVVLKENLVLSLFRDEYILLHENYQLYVLPKVLESKRMAKSGRTKQKEADLEYNVAKQVEKMLMEVHEQALVSADALHHERRILLKQEIGRMVLFFTDQPSLLAPNIQMVFSALALAQCEVVWYFQHVGIASSKSSRGRTVDIDAADPTIGFLLDGMGKLCCLVRKYIAAIKGYALSYLSSCAGRIRFLLGTPGMVALDLDATLKGLFQQVLHCLENIPKPQGENVPAITCDLTDLRKHWLSILMIVTSSRSSVNIRHLEKATVSTGKEGLVSEGNAAYNWSRCVDELEGQLSKHGSLKKLYFYHQHLTTVFRNTMFGPEGRPQHCCAWLGAACCFPECASSIIPEEVNKIGRDSISYVESLIESIMGGLEGLINILDSEGGFGSLEMQLSPEQAAIRLNNATRAKAVSGLLAPGHESYPDNSSSVKMLEAAMQRLTSLCSVLNDMEPICVLNHVFILREYMRDCIIGNFRRRFHSMIRTDSCLQRPSVIESLLRRHLSIIHLAEQHISMDLTEGIREVLLAESFTGPFPNLQVFETPTETHGGGSAIDIISNWYIDNFVKDASRTGVVFDASQNCFRSSQPIGGGYLAEAFTDKRELKALVRLFGGYGVDRLDKLLREHTSALLNCIDSALRSNRDALEGLAGSVNSGDRIERDANLKQIIDIETLADFCIQAGQAITFRRLLVEAVGAVLEEKVPLIYSLLKGLAMQLPEEVPDKNEIIRLRRVASSVGVGDKHDAEWVHSILAEIGSANDNSWTLLPYLCAAFMASNMWSTTAYDVNTGGFSNNLHCLARCVSAVVGGSEYTRMEREHRRSSLSNGHMDELQEPELLSRVSAEANIKSAMQLYVKLSAGLVLDSWNDTSRPYIVPKLIFLDQLCEMSPYLPRSTLEVHIPYTILRSIYHQLYGASLMATEPMEPSPRQSPLISLAHASPSMKQNRADTTPRSHTFEPGYHSSSGSQYDEGYEGDRRTGERQLRSMRRSGPLDYTGTRKVKFVEGSSSGSHGAGSGSLQRFAVSRSGPLSYK</sequence>
<proteinExistence type="evidence at transcript level"/>
<evidence type="ECO:0000250" key="1"/>
<evidence type="ECO:0000256" key="2">
    <source>
        <dbReference type="SAM" id="MobiDB-lite"/>
    </source>
</evidence>
<evidence type="ECO:0000305" key="3"/>
<dbReference type="EMBL" id="AP004632">
    <property type="protein sequence ID" value="BAD09729.1"/>
    <property type="molecule type" value="Genomic_DNA"/>
</dbReference>
<dbReference type="EMBL" id="AP014964">
    <property type="status" value="NOT_ANNOTATED_CDS"/>
    <property type="molecule type" value="Genomic_DNA"/>
</dbReference>
<dbReference type="EMBL" id="AK059291">
    <property type="status" value="NOT_ANNOTATED_CDS"/>
    <property type="molecule type" value="mRNA"/>
</dbReference>
<dbReference type="EMBL" id="AK071354">
    <property type="status" value="NOT_ANNOTATED_CDS"/>
    <property type="molecule type" value="mRNA"/>
</dbReference>
<dbReference type="RefSeq" id="XP_015649924.1">
    <property type="nucleotide sequence ID" value="XM_015794438.1"/>
</dbReference>
<dbReference type="SMR" id="Q6ZBH9"/>
<dbReference type="FunCoup" id="Q6ZBH9">
    <property type="interactions" value="2254"/>
</dbReference>
<dbReference type="STRING" id="39947.Q6ZBH9"/>
<dbReference type="PaxDb" id="39947-Q6ZBH9"/>
<dbReference type="EnsemblPlants" id="Os08t0544500-01">
    <property type="protein sequence ID" value="Os08t0544500-01"/>
    <property type="gene ID" value="Os08g0544500"/>
</dbReference>
<dbReference type="Gramene" id="Os08t0544500-01">
    <property type="protein sequence ID" value="Os08t0544500-01"/>
    <property type="gene ID" value="Os08g0544500"/>
</dbReference>
<dbReference type="eggNOG" id="KOG1917">
    <property type="taxonomic scope" value="Eukaryota"/>
</dbReference>
<dbReference type="InParanoid" id="Q6ZBH9"/>
<dbReference type="OrthoDB" id="548214at2759"/>
<dbReference type="Proteomes" id="UP000000763">
    <property type="component" value="Chromosome 8"/>
</dbReference>
<dbReference type="Proteomes" id="UP000059680">
    <property type="component" value="Chromosome 8"/>
</dbReference>
<dbReference type="ExpressionAtlas" id="Q6ZBH9">
    <property type="expression patterns" value="baseline and differential"/>
</dbReference>
<dbReference type="GO" id="GO:0005789">
    <property type="term" value="C:endoplasmic reticulum membrane"/>
    <property type="evidence" value="ECO:0007669"/>
    <property type="project" value="EnsemblPlants"/>
</dbReference>
<dbReference type="GO" id="GO:0005634">
    <property type="term" value="C:nucleus"/>
    <property type="evidence" value="ECO:0007669"/>
    <property type="project" value="EnsemblPlants"/>
</dbReference>
<dbReference type="GO" id="GO:0031209">
    <property type="term" value="C:SCAR complex"/>
    <property type="evidence" value="ECO:0000318"/>
    <property type="project" value="GO_Central"/>
</dbReference>
<dbReference type="GO" id="GO:0007015">
    <property type="term" value="P:actin filament organization"/>
    <property type="evidence" value="ECO:0007669"/>
    <property type="project" value="EnsemblPlants"/>
</dbReference>
<dbReference type="GO" id="GO:0016477">
    <property type="term" value="P:cell migration"/>
    <property type="evidence" value="ECO:0000318"/>
    <property type="project" value="GO_Central"/>
</dbReference>
<dbReference type="GO" id="GO:0000902">
    <property type="term" value="P:cell morphogenesis"/>
    <property type="evidence" value="ECO:0000318"/>
    <property type="project" value="GO_Central"/>
</dbReference>
<dbReference type="GO" id="GO:0030031">
    <property type="term" value="P:cell projection assembly"/>
    <property type="evidence" value="ECO:0000318"/>
    <property type="project" value="GO_Central"/>
</dbReference>
<dbReference type="GO" id="GO:0030866">
    <property type="term" value="P:cortical actin cytoskeleton organization"/>
    <property type="evidence" value="ECO:0000318"/>
    <property type="project" value="GO_Central"/>
</dbReference>
<dbReference type="GO" id="GO:0009825">
    <property type="term" value="P:multidimensional cell growth"/>
    <property type="evidence" value="ECO:0007669"/>
    <property type="project" value="EnsemblPlants"/>
</dbReference>
<dbReference type="GO" id="GO:0045893">
    <property type="term" value="P:positive regulation of DNA-templated transcription"/>
    <property type="evidence" value="ECO:0007669"/>
    <property type="project" value="EnsemblPlants"/>
</dbReference>
<dbReference type="GO" id="GO:0010090">
    <property type="term" value="P:trichome morphogenesis"/>
    <property type="evidence" value="ECO:0007669"/>
    <property type="project" value="EnsemblPlants"/>
</dbReference>
<dbReference type="InterPro" id="IPR019137">
    <property type="entry name" value="Nck-associated_protein-1"/>
</dbReference>
<dbReference type="PANTHER" id="PTHR12093:SF10">
    <property type="entry name" value="MEMBRANE-ASSOCIATED PROTEIN HEM"/>
    <property type="match status" value="1"/>
</dbReference>
<dbReference type="PANTHER" id="PTHR12093">
    <property type="entry name" value="NCK-ASSOCIATED PROTEIN 1"/>
    <property type="match status" value="1"/>
</dbReference>
<dbReference type="Pfam" id="PF09735">
    <property type="entry name" value="Nckap1"/>
    <property type="match status" value="1"/>
</dbReference>